<comment type="function">
    <text evidence="1">Involved in transcription antitermination. Required for transcription of ribosomal RNA (rRNA) genes. Binds specifically to the boxA antiterminator sequence of the ribosomal RNA (rrn) operons.</text>
</comment>
<comment type="similarity">
    <text evidence="1">Belongs to the NusB family.</text>
</comment>
<sequence>MNRRKSREVAMRLLFQTTLNGENLEEALENLKDVRESEEITKEKDYESVDLKDVDIDYVKRIIKGIEENKEEIDEKIKGNLKNWKIERLSKVDLSILRLCTYELKFEEDIPNRVSVNEAIELAKKYSGEKSATFINGVLGKMI</sequence>
<gene>
    <name evidence="1" type="primary">nusB</name>
    <name type="ordered locus">CLB_1823</name>
</gene>
<accession>A7FUU1</accession>
<protein>
    <recommendedName>
        <fullName evidence="1">Transcription antitermination protein NusB</fullName>
    </recommendedName>
    <alternativeName>
        <fullName evidence="1">Antitermination factor NusB</fullName>
    </alternativeName>
</protein>
<name>NUSB_CLOB1</name>
<keyword id="KW-0694">RNA-binding</keyword>
<keyword id="KW-0804">Transcription</keyword>
<keyword id="KW-0889">Transcription antitermination</keyword>
<keyword id="KW-0805">Transcription regulation</keyword>
<evidence type="ECO:0000255" key="1">
    <source>
        <dbReference type="HAMAP-Rule" id="MF_00073"/>
    </source>
</evidence>
<feature type="chain" id="PRO_1000023728" description="Transcription antitermination protein NusB">
    <location>
        <begin position="1"/>
        <end position="143"/>
    </location>
</feature>
<reference key="1">
    <citation type="journal article" date="2007" name="PLoS ONE">
        <title>Analysis of the neurotoxin complex genes in Clostridium botulinum A1-A4 and B1 strains: BoNT/A3, /Ba4 and /B1 clusters are located within plasmids.</title>
        <authorList>
            <person name="Smith T.J."/>
            <person name="Hill K.K."/>
            <person name="Foley B.T."/>
            <person name="Detter J.C."/>
            <person name="Munk A.C."/>
            <person name="Bruce D.C."/>
            <person name="Doggett N.A."/>
            <person name="Smith L.A."/>
            <person name="Marks J.D."/>
            <person name="Xie G."/>
            <person name="Brettin T.S."/>
        </authorList>
    </citation>
    <scope>NUCLEOTIDE SEQUENCE [LARGE SCALE GENOMIC DNA]</scope>
    <source>
        <strain>ATCC 19397 / Type A</strain>
    </source>
</reference>
<dbReference type="EMBL" id="CP000726">
    <property type="protein sequence ID" value="ABS34724.1"/>
    <property type="molecule type" value="Genomic_DNA"/>
</dbReference>
<dbReference type="RefSeq" id="WP_003358828.1">
    <property type="nucleotide sequence ID" value="NC_009697.1"/>
</dbReference>
<dbReference type="SMR" id="A7FUU1"/>
<dbReference type="GeneID" id="5186053"/>
<dbReference type="KEGG" id="cba:CLB_1823"/>
<dbReference type="HOGENOM" id="CLU_087843_3_1_9"/>
<dbReference type="GO" id="GO:0005829">
    <property type="term" value="C:cytosol"/>
    <property type="evidence" value="ECO:0007669"/>
    <property type="project" value="TreeGrafter"/>
</dbReference>
<dbReference type="GO" id="GO:0003723">
    <property type="term" value="F:RNA binding"/>
    <property type="evidence" value="ECO:0007669"/>
    <property type="project" value="UniProtKB-UniRule"/>
</dbReference>
<dbReference type="GO" id="GO:0006353">
    <property type="term" value="P:DNA-templated transcription termination"/>
    <property type="evidence" value="ECO:0007669"/>
    <property type="project" value="UniProtKB-UniRule"/>
</dbReference>
<dbReference type="GO" id="GO:0031564">
    <property type="term" value="P:transcription antitermination"/>
    <property type="evidence" value="ECO:0007669"/>
    <property type="project" value="UniProtKB-KW"/>
</dbReference>
<dbReference type="FunFam" id="1.10.940.10:FF:000003">
    <property type="entry name" value="Transcription antitermination factor NusB"/>
    <property type="match status" value="1"/>
</dbReference>
<dbReference type="Gene3D" id="1.10.940.10">
    <property type="entry name" value="NusB-like"/>
    <property type="match status" value="1"/>
</dbReference>
<dbReference type="HAMAP" id="MF_00073">
    <property type="entry name" value="NusB"/>
    <property type="match status" value="1"/>
</dbReference>
<dbReference type="InterPro" id="IPR035926">
    <property type="entry name" value="NusB-like_sf"/>
</dbReference>
<dbReference type="InterPro" id="IPR011605">
    <property type="entry name" value="NusB_fam"/>
</dbReference>
<dbReference type="InterPro" id="IPR006027">
    <property type="entry name" value="NusB_RsmB_TIM44"/>
</dbReference>
<dbReference type="NCBIfam" id="TIGR01951">
    <property type="entry name" value="nusB"/>
    <property type="match status" value="1"/>
</dbReference>
<dbReference type="PANTHER" id="PTHR11078:SF3">
    <property type="entry name" value="ANTITERMINATION NUSB DOMAIN-CONTAINING PROTEIN"/>
    <property type="match status" value="1"/>
</dbReference>
<dbReference type="PANTHER" id="PTHR11078">
    <property type="entry name" value="N UTILIZATION SUBSTANCE PROTEIN B-RELATED"/>
    <property type="match status" value="1"/>
</dbReference>
<dbReference type="Pfam" id="PF01029">
    <property type="entry name" value="NusB"/>
    <property type="match status" value="1"/>
</dbReference>
<dbReference type="SUPFAM" id="SSF48013">
    <property type="entry name" value="NusB-like"/>
    <property type="match status" value="1"/>
</dbReference>
<organism>
    <name type="scientific">Clostridium botulinum (strain ATCC 19397 / Type A)</name>
    <dbReference type="NCBI Taxonomy" id="441770"/>
    <lineage>
        <taxon>Bacteria</taxon>
        <taxon>Bacillati</taxon>
        <taxon>Bacillota</taxon>
        <taxon>Clostridia</taxon>
        <taxon>Eubacteriales</taxon>
        <taxon>Clostridiaceae</taxon>
        <taxon>Clostridium</taxon>
    </lineage>
</organism>
<proteinExistence type="inferred from homology"/>